<gene>
    <name type="primary">BXL6</name>
    <name type="ordered locus">At5g10560</name>
    <name type="ORF">F12B17.90</name>
</gene>
<sequence length="792" mass="87185">MNLQLTLISLLFFTSAIAETFKNLDSHPQFPCKPPHFSSYPFCNVSLSIKQRAISLVSLLMLPEKIGQLSNTAASVPRLGIPPYEWWSESLHGLADNGPGVSFNGSISAATSFPQVIVSAASFNRTLWYEIGSAVAVEGRAMYNGGQAGLTFWAPNINVFRDPRWGRGQETPGEDPKVVSEYGVEFVRGFQEKKKRKVLKRRFSDDVDDDRHDDDADGKLMLSACCKHFTAYDLEKWGNFTRYDFNAVVTEQDMEDTYQPPFETCIRDGKASCLMCSYNAVNGVPACAQGDLLQKARVEWGFEGYITSDCDAVATIFAYQGYTKSPEEAVADAIKAGVDINCGTYMLRHTQSAIEQGKVSEELVDRALLNLFAVQLRLGLFDGDPRRGQYGKLGSNDICSSDHRKLALEATRQGIVLLKNDHKLLPLNKNHVSSLAIVGPMANNISNMGGTYTGKPCQRKTLFTELLEYVKKTSYASGCSDVSCDSDTGFGEAVAIAKGADFVIVVAGLDLSQETEDKDRVSLSLPGKQKDLVSHVAAVSKKPVILVLTGGGPVDVTFAKNDPRIGSIIWIGYPGETGGQALAEIIFGDFNPGGRLPTTWYPESFTDVAMSDMHMRANSSRGYPGRTYRFYTGPQVYSFGTGLSYTKFEYKILSAPIRLSLSELLPQQSSHKKQLQHGEELRYLQLDDVIVNSCESLRFNVRVHVSNTGEIDGSHVVMLFSKMPPVLSGVPEKQLIGYDRVHVRSNEMMETVFVIDPCKQLSVANDVGKRVIPLGSHVLFLGDLQHSLSVEF</sequence>
<dbReference type="EC" id="3.2.1.-"/>
<dbReference type="EMBL" id="AL353995">
    <property type="protein sequence ID" value="CAB89387.1"/>
    <property type="molecule type" value="Genomic_DNA"/>
</dbReference>
<dbReference type="EMBL" id="CP002688">
    <property type="protein sequence ID" value="AED91563.1"/>
    <property type="molecule type" value="Genomic_DNA"/>
</dbReference>
<dbReference type="EMBL" id="AY057483">
    <property type="protein sequence ID" value="AAL09717.1"/>
    <property type="molecule type" value="mRNA"/>
</dbReference>
<dbReference type="EMBL" id="AK117237">
    <property type="protein sequence ID" value="BAC41913.1"/>
    <property type="status" value="ALT_INIT"/>
    <property type="molecule type" value="mRNA"/>
</dbReference>
<dbReference type="PIR" id="T49983">
    <property type="entry name" value="T49983"/>
</dbReference>
<dbReference type="RefSeq" id="NP_196618.1">
    <property type="nucleotide sequence ID" value="NM_121094.3"/>
</dbReference>
<dbReference type="SMR" id="Q9LXA8"/>
<dbReference type="FunCoup" id="Q9LXA8">
    <property type="interactions" value="1141"/>
</dbReference>
<dbReference type="STRING" id="3702.Q9LXA8"/>
<dbReference type="CAZy" id="GH3">
    <property type="family name" value="Glycoside Hydrolase Family 3"/>
</dbReference>
<dbReference type="GlyCosmos" id="Q9LXA8">
    <property type="glycosylation" value="6 sites, No reported glycans"/>
</dbReference>
<dbReference type="GlyGen" id="Q9LXA8">
    <property type="glycosylation" value="6 sites"/>
</dbReference>
<dbReference type="iPTMnet" id="Q9LXA8"/>
<dbReference type="PaxDb" id="3702-AT5G10560.1"/>
<dbReference type="ProteomicsDB" id="240441"/>
<dbReference type="EnsemblPlants" id="AT5G10560.1">
    <property type="protein sequence ID" value="AT5G10560.1"/>
    <property type="gene ID" value="AT5G10560"/>
</dbReference>
<dbReference type="GeneID" id="830921"/>
<dbReference type="Gramene" id="AT5G10560.1">
    <property type="protein sequence ID" value="AT5G10560.1"/>
    <property type="gene ID" value="AT5G10560"/>
</dbReference>
<dbReference type="KEGG" id="ath:AT5G10560"/>
<dbReference type="Araport" id="AT5G10560"/>
<dbReference type="TAIR" id="AT5G10560"/>
<dbReference type="eggNOG" id="ENOG502QQ55">
    <property type="taxonomic scope" value="Eukaryota"/>
</dbReference>
<dbReference type="HOGENOM" id="CLU_004542_5_3_1"/>
<dbReference type="InParanoid" id="Q9LXA8"/>
<dbReference type="OMA" id="HMAIGTT"/>
<dbReference type="PhylomeDB" id="Q9LXA8"/>
<dbReference type="BioCyc" id="ARA:AT5G10560-MONOMER"/>
<dbReference type="PRO" id="PR:Q9LXA8"/>
<dbReference type="Proteomes" id="UP000006548">
    <property type="component" value="Chromosome 5"/>
</dbReference>
<dbReference type="ExpressionAtlas" id="Q9LXA8">
    <property type="expression patterns" value="baseline and differential"/>
</dbReference>
<dbReference type="GO" id="GO:0005829">
    <property type="term" value="C:cytosol"/>
    <property type="evidence" value="ECO:0007005"/>
    <property type="project" value="TAIR"/>
</dbReference>
<dbReference type="GO" id="GO:0005576">
    <property type="term" value="C:extracellular region"/>
    <property type="evidence" value="ECO:0007669"/>
    <property type="project" value="UniProtKB-KW"/>
</dbReference>
<dbReference type="GO" id="GO:0000325">
    <property type="term" value="C:plant-type vacuole"/>
    <property type="evidence" value="ECO:0007005"/>
    <property type="project" value="TAIR"/>
</dbReference>
<dbReference type="GO" id="GO:0005773">
    <property type="term" value="C:vacuole"/>
    <property type="evidence" value="ECO:0000314"/>
    <property type="project" value="TAIR"/>
</dbReference>
<dbReference type="GO" id="GO:0009044">
    <property type="term" value="F:xylan 1,4-beta-xylosidase activity"/>
    <property type="evidence" value="ECO:0000304"/>
    <property type="project" value="TAIR"/>
</dbReference>
<dbReference type="GO" id="GO:0045493">
    <property type="term" value="P:xylan catabolic process"/>
    <property type="evidence" value="ECO:0007669"/>
    <property type="project" value="InterPro"/>
</dbReference>
<dbReference type="FunFam" id="3.40.50.1700:FF:000001">
    <property type="entry name" value="probable beta-D-xylosidase 2"/>
    <property type="match status" value="1"/>
</dbReference>
<dbReference type="FunFam" id="3.20.20.300:FF:000004">
    <property type="entry name" value="probable beta-D-xylosidase 7"/>
    <property type="match status" value="1"/>
</dbReference>
<dbReference type="Gene3D" id="3.40.50.1700">
    <property type="entry name" value="Glycoside hydrolase family 3 C-terminal domain"/>
    <property type="match status" value="1"/>
</dbReference>
<dbReference type="Gene3D" id="3.20.20.300">
    <property type="entry name" value="Glycoside hydrolase, family 3, N-terminal domain"/>
    <property type="match status" value="1"/>
</dbReference>
<dbReference type="Gene3D" id="2.60.40.10">
    <property type="entry name" value="Immunoglobulins"/>
    <property type="match status" value="1"/>
</dbReference>
<dbReference type="InterPro" id="IPR044993">
    <property type="entry name" value="BXL"/>
</dbReference>
<dbReference type="InterPro" id="IPR026891">
    <property type="entry name" value="Fn3-like"/>
</dbReference>
<dbReference type="InterPro" id="IPR002772">
    <property type="entry name" value="Glyco_hydro_3_C"/>
</dbReference>
<dbReference type="InterPro" id="IPR036881">
    <property type="entry name" value="Glyco_hydro_3_C_sf"/>
</dbReference>
<dbReference type="InterPro" id="IPR001764">
    <property type="entry name" value="Glyco_hydro_3_N"/>
</dbReference>
<dbReference type="InterPro" id="IPR036962">
    <property type="entry name" value="Glyco_hydro_3_N_sf"/>
</dbReference>
<dbReference type="InterPro" id="IPR017853">
    <property type="entry name" value="Glycoside_hydrolase_SF"/>
</dbReference>
<dbReference type="InterPro" id="IPR013783">
    <property type="entry name" value="Ig-like_fold"/>
</dbReference>
<dbReference type="PANTHER" id="PTHR42721:SF1">
    <property type="entry name" value="BETA-D-XYLOSIDASE 6-RELATED"/>
    <property type="match status" value="1"/>
</dbReference>
<dbReference type="PANTHER" id="PTHR42721">
    <property type="entry name" value="SUGAR HYDROLASE-RELATED"/>
    <property type="match status" value="1"/>
</dbReference>
<dbReference type="Pfam" id="PF14310">
    <property type="entry name" value="Fn3-like"/>
    <property type="match status" value="1"/>
</dbReference>
<dbReference type="Pfam" id="PF00933">
    <property type="entry name" value="Glyco_hydro_3"/>
    <property type="match status" value="1"/>
</dbReference>
<dbReference type="Pfam" id="PF01915">
    <property type="entry name" value="Glyco_hydro_3_C"/>
    <property type="match status" value="1"/>
</dbReference>
<dbReference type="SMART" id="SM01217">
    <property type="entry name" value="Fn3_like"/>
    <property type="match status" value="1"/>
</dbReference>
<dbReference type="SUPFAM" id="SSF51445">
    <property type="entry name" value="(Trans)glycosidases"/>
    <property type="match status" value="1"/>
</dbReference>
<dbReference type="SUPFAM" id="SSF52279">
    <property type="entry name" value="Beta-D-glucan exohydrolase, C-terminal domain"/>
    <property type="match status" value="1"/>
</dbReference>
<reference key="1">
    <citation type="journal article" date="2000" name="Nature">
        <title>Sequence and analysis of chromosome 5 of the plant Arabidopsis thaliana.</title>
        <authorList>
            <person name="Tabata S."/>
            <person name="Kaneko T."/>
            <person name="Nakamura Y."/>
            <person name="Kotani H."/>
            <person name="Kato T."/>
            <person name="Asamizu E."/>
            <person name="Miyajima N."/>
            <person name="Sasamoto S."/>
            <person name="Kimura T."/>
            <person name="Hosouchi T."/>
            <person name="Kawashima K."/>
            <person name="Kohara M."/>
            <person name="Matsumoto M."/>
            <person name="Matsuno A."/>
            <person name="Muraki A."/>
            <person name="Nakayama S."/>
            <person name="Nakazaki N."/>
            <person name="Naruo K."/>
            <person name="Okumura S."/>
            <person name="Shinpo S."/>
            <person name="Takeuchi C."/>
            <person name="Wada T."/>
            <person name="Watanabe A."/>
            <person name="Yamada M."/>
            <person name="Yasuda M."/>
            <person name="Sato S."/>
            <person name="de la Bastide M."/>
            <person name="Huang E."/>
            <person name="Spiegel L."/>
            <person name="Gnoj L."/>
            <person name="O'Shaughnessy A."/>
            <person name="Preston R."/>
            <person name="Habermann K."/>
            <person name="Murray J."/>
            <person name="Johnson D."/>
            <person name="Rohlfing T."/>
            <person name="Nelson J."/>
            <person name="Stoneking T."/>
            <person name="Pepin K."/>
            <person name="Spieth J."/>
            <person name="Sekhon M."/>
            <person name="Armstrong J."/>
            <person name="Becker M."/>
            <person name="Belter E."/>
            <person name="Cordum H."/>
            <person name="Cordes M."/>
            <person name="Courtney L."/>
            <person name="Courtney W."/>
            <person name="Dante M."/>
            <person name="Du H."/>
            <person name="Edwards J."/>
            <person name="Fryman J."/>
            <person name="Haakensen B."/>
            <person name="Lamar E."/>
            <person name="Latreille P."/>
            <person name="Leonard S."/>
            <person name="Meyer R."/>
            <person name="Mulvaney E."/>
            <person name="Ozersky P."/>
            <person name="Riley A."/>
            <person name="Strowmatt C."/>
            <person name="Wagner-McPherson C."/>
            <person name="Wollam A."/>
            <person name="Yoakum M."/>
            <person name="Bell M."/>
            <person name="Dedhia N."/>
            <person name="Parnell L."/>
            <person name="Shah R."/>
            <person name="Rodriguez M."/>
            <person name="Hoon See L."/>
            <person name="Vil D."/>
            <person name="Baker J."/>
            <person name="Kirchoff K."/>
            <person name="Toth K."/>
            <person name="King L."/>
            <person name="Bahret A."/>
            <person name="Miller B."/>
            <person name="Marra M.A."/>
            <person name="Martienssen R."/>
            <person name="McCombie W.R."/>
            <person name="Wilson R.K."/>
            <person name="Murphy G."/>
            <person name="Bancroft I."/>
            <person name="Volckaert G."/>
            <person name="Wambutt R."/>
            <person name="Duesterhoeft A."/>
            <person name="Stiekema W."/>
            <person name="Pohl T."/>
            <person name="Entian K.-D."/>
            <person name="Terryn N."/>
            <person name="Hartley N."/>
            <person name="Bent E."/>
            <person name="Johnson S."/>
            <person name="Langham S.-A."/>
            <person name="McCullagh B."/>
            <person name="Robben J."/>
            <person name="Grymonprez B."/>
            <person name="Zimmermann W."/>
            <person name="Ramsperger U."/>
            <person name="Wedler H."/>
            <person name="Balke K."/>
            <person name="Wedler E."/>
            <person name="Peters S."/>
            <person name="van Staveren M."/>
            <person name="Dirkse W."/>
            <person name="Mooijman P."/>
            <person name="Klein Lankhorst R."/>
            <person name="Weitzenegger T."/>
            <person name="Bothe G."/>
            <person name="Rose M."/>
            <person name="Hauf J."/>
            <person name="Berneiser S."/>
            <person name="Hempel S."/>
            <person name="Feldpausch M."/>
            <person name="Lamberth S."/>
            <person name="Villarroel R."/>
            <person name="Gielen J."/>
            <person name="Ardiles W."/>
            <person name="Bents O."/>
            <person name="Lemcke K."/>
            <person name="Kolesov G."/>
            <person name="Mayer K.F.X."/>
            <person name="Rudd S."/>
            <person name="Schoof H."/>
            <person name="Schueller C."/>
            <person name="Zaccaria P."/>
            <person name="Mewes H.-W."/>
            <person name="Bevan M."/>
            <person name="Fransz P.F."/>
        </authorList>
    </citation>
    <scope>NUCLEOTIDE SEQUENCE [LARGE SCALE GENOMIC DNA]</scope>
    <source>
        <strain>cv. Columbia</strain>
    </source>
</reference>
<reference key="2">
    <citation type="journal article" date="2017" name="Plant J.">
        <title>Araport11: a complete reannotation of the Arabidopsis thaliana reference genome.</title>
        <authorList>
            <person name="Cheng C.Y."/>
            <person name="Krishnakumar V."/>
            <person name="Chan A.P."/>
            <person name="Thibaud-Nissen F."/>
            <person name="Schobel S."/>
            <person name="Town C.D."/>
        </authorList>
    </citation>
    <scope>GENOME REANNOTATION</scope>
    <source>
        <strain>cv. Columbia</strain>
    </source>
</reference>
<reference key="3">
    <citation type="journal article" date="2003" name="Science">
        <title>Empirical analysis of transcriptional activity in the Arabidopsis genome.</title>
        <authorList>
            <person name="Yamada K."/>
            <person name="Lim J."/>
            <person name="Dale J.M."/>
            <person name="Chen H."/>
            <person name="Shinn P."/>
            <person name="Palm C.J."/>
            <person name="Southwick A.M."/>
            <person name="Wu H.C."/>
            <person name="Kim C.J."/>
            <person name="Nguyen M."/>
            <person name="Pham P.K."/>
            <person name="Cheuk R.F."/>
            <person name="Karlin-Newmann G."/>
            <person name="Liu S.X."/>
            <person name="Lam B."/>
            <person name="Sakano H."/>
            <person name="Wu T."/>
            <person name="Yu G."/>
            <person name="Miranda M."/>
            <person name="Quach H.L."/>
            <person name="Tripp M."/>
            <person name="Chang C.H."/>
            <person name="Lee J.M."/>
            <person name="Toriumi M.J."/>
            <person name="Chan M.M."/>
            <person name="Tang C.C."/>
            <person name="Onodera C.S."/>
            <person name="Deng J.M."/>
            <person name="Akiyama K."/>
            <person name="Ansari Y."/>
            <person name="Arakawa T."/>
            <person name="Banh J."/>
            <person name="Banno F."/>
            <person name="Bowser L."/>
            <person name="Brooks S.Y."/>
            <person name="Carninci P."/>
            <person name="Chao Q."/>
            <person name="Choy N."/>
            <person name="Enju A."/>
            <person name="Goldsmith A.D."/>
            <person name="Gurjal M."/>
            <person name="Hansen N.F."/>
            <person name="Hayashizaki Y."/>
            <person name="Johnson-Hopson C."/>
            <person name="Hsuan V.W."/>
            <person name="Iida K."/>
            <person name="Karnes M."/>
            <person name="Khan S."/>
            <person name="Koesema E."/>
            <person name="Ishida J."/>
            <person name="Jiang P.X."/>
            <person name="Jones T."/>
            <person name="Kawai J."/>
            <person name="Kamiya A."/>
            <person name="Meyers C."/>
            <person name="Nakajima M."/>
            <person name="Narusaka M."/>
            <person name="Seki M."/>
            <person name="Sakurai T."/>
            <person name="Satou M."/>
            <person name="Tamse R."/>
            <person name="Vaysberg M."/>
            <person name="Wallender E.K."/>
            <person name="Wong C."/>
            <person name="Yamamura Y."/>
            <person name="Yuan S."/>
            <person name="Shinozaki K."/>
            <person name="Davis R.W."/>
            <person name="Theologis A."/>
            <person name="Ecker J.R."/>
        </authorList>
    </citation>
    <scope>NUCLEOTIDE SEQUENCE [LARGE SCALE MRNA]</scope>
    <source>
        <strain>cv. Columbia</strain>
    </source>
</reference>
<reference key="4">
    <citation type="journal article" date="2002" name="Science">
        <title>Functional annotation of a full-length Arabidopsis cDNA collection.</title>
        <authorList>
            <person name="Seki M."/>
            <person name="Narusaka M."/>
            <person name="Kamiya A."/>
            <person name="Ishida J."/>
            <person name="Satou M."/>
            <person name="Sakurai T."/>
            <person name="Nakajima M."/>
            <person name="Enju A."/>
            <person name="Akiyama K."/>
            <person name="Oono Y."/>
            <person name="Muramatsu M."/>
            <person name="Hayashizaki Y."/>
            <person name="Kawai J."/>
            <person name="Carninci P."/>
            <person name="Itoh M."/>
            <person name="Ishii Y."/>
            <person name="Arakawa T."/>
            <person name="Shibata K."/>
            <person name="Shinagawa A."/>
            <person name="Shinozaki K."/>
        </authorList>
    </citation>
    <scope>NUCLEOTIDE SEQUENCE [LARGE SCALE MRNA] OF 8-792</scope>
    <source>
        <strain>cv. Columbia</strain>
    </source>
</reference>
<reference key="5">
    <citation type="journal article" date="2003" name="Plant J.">
        <title>AtBXL1, a novel higher plant (Arabidopsis thaliana) putative beta-xylosidase gene, is involved in secondary cell wall metabolism and plant development.</title>
        <authorList>
            <person name="Goujon T."/>
            <person name="Minic Z."/>
            <person name="El Amrani A."/>
            <person name="Lerouxel O."/>
            <person name="Aletti E."/>
            <person name="Lapierre C."/>
            <person name="Joseleau J.-P."/>
            <person name="Jouanin L."/>
        </authorList>
    </citation>
    <scope>IDENTIFICATION</scope>
</reference>
<comment type="subcellular location">
    <subcellularLocation>
        <location evidence="1">Secreted</location>
        <location evidence="1">Extracellular space</location>
        <location evidence="1">Extracellular matrix</location>
    </subcellularLocation>
</comment>
<comment type="similarity">
    <text evidence="3">Belongs to the glycosyl hydrolase 3 family.</text>
</comment>
<comment type="sequence caution" evidence="3">
    <conflict type="erroneous initiation">
        <sequence resource="EMBL-CDS" id="BAC41913"/>
    </conflict>
</comment>
<protein>
    <recommendedName>
        <fullName>Probable beta-D-xylosidase 6</fullName>
        <shortName>AtBXL6</shortName>
        <ecNumber>3.2.1.-</ecNumber>
    </recommendedName>
</protein>
<organism>
    <name type="scientific">Arabidopsis thaliana</name>
    <name type="common">Mouse-ear cress</name>
    <dbReference type="NCBI Taxonomy" id="3702"/>
    <lineage>
        <taxon>Eukaryota</taxon>
        <taxon>Viridiplantae</taxon>
        <taxon>Streptophyta</taxon>
        <taxon>Embryophyta</taxon>
        <taxon>Tracheophyta</taxon>
        <taxon>Spermatophyta</taxon>
        <taxon>Magnoliopsida</taxon>
        <taxon>eudicotyledons</taxon>
        <taxon>Gunneridae</taxon>
        <taxon>Pentapetalae</taxon>
        <taxon>rosids</taxon>
        <taxon>malvids</taxon>
        <taxon>Brassicales</taxon>
        <taxon>Brassicaceae</taxon>
        <taxon>Camelineae</taxon>
        <taxon>Arabidopsis</taxon>
    </lineage>
</organism>
<name>BXL6_ARATH</name>
<evidence type="ECO:0000250" key="1"/>
<evidence type="ECO:0000255" key="2"/>
<evidence type="ECO:0000305" key="3"/>
<accession>Q9LXA8</accession>
<accession>Q8GZ32</accession>
<keyword id="KW-0272">Extracellular matrix</keyword>
<keyword id="KW-0325">Glycoprotein</keyword>
<keyword id="KW-0326">Glycosidase</keyword>
<keyword id="KW-0378">Hydrolase</keyword>
<keyword id="KW-1185">Reference proteome</keyword>
<keyword id="KW-0964">Secreted</keyword>
<keyword id="KW-0732">Signal</keyword>
<feature type="signal peptide" evidence="2">
    <location>
        <begin position="1"/>
        <end position="18"/>
    </location>
</feature>
<feature type="chain" id="PRO_0000384061" description="Probable beta-D-xylosidase 6">
    <location>
        <begin position="19"/>
        <end position="792"/>
    </location>
</feature>
<feature type="active site" evidence="1">
    <location>
        <position position="309"/>
    </location>
</feature>
<feature type="glycosylation site" description="N-linked (GlcNAc...) asparagine" evidence="2">
    <location>
        <position position="44"/>
    </location>
</feature>
<feature type="glycosylation site" description="N-linked (GlcNAc...) asparagine" evidence="2">
    <location>
        <position position="104"/>
    </location>
</feature>
<feature type="glycosylation site" description="N-linked (GlcNAc...) asparagine" evidence="2">
    <location>
        <position position="124"/>
    </location>
</feature>
<feature type="glycosylation site" description="N-linked (GlcNAc...) asparagine" evidence="2">
    <location>
        <position position="239"/>
    </location>
</feature>
<feature type="glycosylation site" description="N-linked (GlcNAc...) asparagine" evidence="2">
    <location>
        <position position="444"/>
    </location>
</feature>
<feature type="glycosylation site" description="N-linked (GlcNAc...) asparagine" evidence="2">
    <location>
        <position position="618"/>
    </location>
</feature>
<proteinExistence type="evidence at transcript level"/>